<accession>Q0A769</accession>
<evidence type="ECO:0000255" key="1">
    <source>
        <dbReference type="HAMAP-Rule" id="MF_01547"/>
    </source>
</evidence>
<organism>
    <name type="scientific">Alkalilimnicola ehrlichii (strain ATCC BAA-1101 / DSM 17681 / MLHE-1)</name>
    <dbReference type="NCBI Taxonomy" id="187272"/>
    <lineage>
        <taxon>Bacteria</taxon>
        <taxon>Pseudomonadati</taxon>
        <taxon>Pseudomonadota</taxon>
        <taxon>Gammaproteobacteria</taxon>
        <taxon>Chromatiales</taxon>
        <taxon>Ectothiorhodospiraceae</taxon>
        <taxon>Alkalilimnicola</taxon>
    </lineage>
</organism>
<gene>
    <name evidence="1" type="primary">rlmE</name>
    <name evidence="1" type="synonym">ftsJ</name>
    <name evidence="1" type="synonym">rrmJ</name>
    <name type="ordered locus">Mlg_1976</name>
</gene>
<sequence length="209" mass="23323">MGRRKRRPGSRRWLDEHHSDHWVQQAQKAGYRSRAAFKLLEIQEKDRLIRPGMTVVDLGAAPGGWCQVAAELVGDRGAVFALDILPMEALPGVHVIQGDFTEEAPLQALLQALEGRPVDLVLSDMAPNLSGVRVVDQPRAMYLAELALDFAGQVLQPGGDFLTKVFHGEGLDDYRRDLQRQFSKVITRKPRASRARSRESYLLARGFGL</sequence>
<keyword id="KW-0963">Cytoplasm</keyword>
<keyword id="KW-0489">Methyltransferase</keyword>
<keyword id="KW-1185">Reference proteome</keyword>
<keyword id="KW-0698">rRNA processing</keyword>
<keyword id="KW-0949">S-adenosyl-L-methionine</keyword>
<keyword id="KW-0808">Transferase</keyword>
<reference key="1">
    <citation type="submission" date="2006-08" db="EMBL/GenBank/DDBJ databases">
        <title>Complete sequence of Alkalilimnicola ehrilichei MLHE-1.</title>
        <authorList>
            <person name="Copeland A."/>
            <person name="Lucas S."/>
            <person name="Lapidus A."/>
            <person name="Barry K."/>
            <person name="Detter J.C."/>
            <person name="Glavina del Rio T."/>
            <person name="Hammon N."/>
            <person name="Israni S."/>
            <person name="Dalin E."/>
            <person name="Tice H."/>
            <person name="Pitluck S."/>
            <person name="Sims D."/>
            <person name="Brettin T."/>
            <person name="Bruce D."/>
            <person name="Han C."/>
            <person name="Tapia R."/>
            <person name="Gilna P."/>
            <person name="Schmutz J."/>
            <person name="Larimer F."/>
            <person name="Land M."/>
            <person name="Hauser L."/>
            <person name="Kyrpides N."/>
            <person name="Mikhailova N."/>
            <person name="Oremland R.S."/>
            <person name="Hoeft S.E."/>
            <person name="Switzer-Blum J."/>
            <person name="Kulp T."/>
            <person name="King G."/>
            <person name="Tabita R."/>
            <person name="Witte B."/>
            <person name="Santini J.M."/>
            <person name="Basu P."/>
            <person name="Hollibaugh J.T."/>
            <person name="Xie G."/>
            <person name="Stolz J.F."/>
            <person name="Richardson P."/>
        </authorList>
    </citation>
    <scope>NUCLEOTIDE SEQUENCE [LARGE SCALE GENOMIC DNA]</scope>
    <source>
        <strain>ATCC BAA-1101 / DSM 17681 / MLHE-1</strain>
    </source>
</reference>
<feature type="chain" id="PRO_0000282722" description="Ribosomal RNA large subunit methyltransferase E">
    <location>
        <begin position="1"/>
        <end position="209"/>
    </location>
</feature>
<feature type="active site" description="Proton acceptor" evidence="1">
    <location>
        <position position="164"/>
    </location>
</feature>
<feature type="binding site" evidence="1">
    <location>
        <position position="63"/>
    </location>
    <ligand>
        <name>S-adenosyl-L-methionine</name>
        <dbReference type="ChEBI" id="CHEBI:59789"/>
    </ligand>
</feature>
<feature type="binding site" evidence="1">
    <location>
        <position position="65"/>
    </location>
    <ligand>
        <name>S-adenosyl-L-methionine</name>
        <dbReference type="ChEBI" id="CHEBI:59789"/>
    </ligand>
</feature>
<feature type="binding site" evidence="1">
    <location>
        <position position="83"/>
    </location>
    <ligand>
        <name>S-adenosyl-L-methionine</name>
        <dbReference type="ChEBI" id="CHEBI:59789"/>
    </ligand>
</feature>
<feature type="binding site" evidence="1">
    <location>
        <position position="99"/>
    </location>
    <ligand>
        <name>S-adenosyl-L-methionine</name>
        <dbReference type="ChEBI" id="CHEBI:59789"/>
    </ligand>
</feature>
<feature type="binding site" evidence="1">
    <location>
        <position position="124"/>
    </location>
    <ligand>
        <name>S-adenosyl-L-methionine</name>
        <dbReference type="ChEBI" id="CHEBI:59789"/>
    </ligand>
</feature>
<proteinExistence type="inferred from homology"/>
<name>RLME_ALKEH</name>
<dbReference type="EC" id="2.1.1.166" evidence="1"/>
<dbReference type="EMBL" id="CP000453">
    <property type="protein sequence ID" value="ABI57318.1"/>
    <property type="molecule type" value="Genomic_DNA"/>
</dbReference>
<dbReference type="RefSeq" id="WP_011629712.1">
    <property type="nucleotide sequence ID" value="NC_008340.1"/>
</dbReference>
<dbReference type="SMR" id="Q0A769"/>
<dbReference type="KEGG" id="aeh:Mlg_1976"/>
<dbReference type="eggNOG" id="COG0293">
    <property type="taxonomic scope" value="Bacteria"/>
</dbReference>
<dbReference type="HOGENOM" id="CLU_009422_4_0_6"/>
<dbReference type="OrthoDB" id="9790080at2"/>
<dbReference type="Proteomes" id="UP000001962">
    <property type="component" value="Chromosome"/>
</dbReference>
<dbReference type="GO" id="GO:0005737">
    <property type="term" value="C:cytoplasm"/>
    <property type="evidence" value="ECO:0007669"/>
    <property type="project" value="UniProtKB-SubCell"/>
</dbReference>
<dbReference type="GO" id="GO:0008650">
    <property type="term" value="F:rRNA (uridine-2'-O-)-methyltransferase activity"/>
    <property type="evidence" value="ECO:0007669"/>
    <property type="project" value="UniProtKB-UniRule"/>
</dbReference>
<dbReference type="FunFam" id="3.40.50.150:FF:000005">
    <property type="entry name" value="Ribosomal RNA large subunit methyltransferase E"/>
    <property type="match status" value="1"/>
</dbReference>
<dbReference type="Gene3D" id="3.40.50.150">
    <property type="entry name" value="Vaccinia Virus protein VP39"/>
    <property type="match status" value="1"/>
</dbReference>
<dbReference type="HAMAP" id="MF_01547">
    <property type="entry name" value="RNA_methyltr_E"/>
    <property type="match status" value="1"/>
</dbReference>
<dbReference type="InterPro" id="IPR050082">
    <property type="entry name" value="RNA_methyltr_RlmE"/>
</dbReference>
<dbReference type="InterPro" id="IPR002877">
    <property type="entry name" value="RNA_MeTrfase_FtsJ_dom"/>
</dbReference>
<dbReference type="InterPro" id="IPR015507">
    <property type="entry name" value="rRNA-MeTfrase_E"/>
</dbReference>
<dbReference type="InterPro" id="IPR029063">
    <property type="entry name" value="SAM-dependent_MTases_sf"/>
</dbReference>
<dbReference type="NCBIfam" id="NF008390">
    <property type="entry name" value="PRK11188.1"/>
    <property type="match status" value="1"/>
</dbReference>
<dbReference type="PANTHER" id="PTHR10920">
    <property type="entry name" value="RIBOSOMAL RNA METHYLTRANSFERASE"/>
    <property type="match status" value="1"/>
</dbReference>
<dbReference type="PANTHER" id="PTHR10920:SF18">
    <property type="entry name" value="RRNA METHYLTRANSFERASE 2, MITOCHONDRIAL"/>
    <property type="match status" value="1"/>
</dbReference>
<dbReference type="Pfam" id="PF01728">
    <property type="entry name" value="FtsJ"/>
    <property type="match status" value="1"/>
</dbReference>
<dbReference type="PIRSF" id="PIRSF005461">
    <property type="entry name" value="23S_rRNA_mtase"/>
    <property type="match status" value="1"/>
</dbReference>
<dbReference type="SUPFAM" id="SSF53335">
    <property type="entry name" value="S-adenosyl-L-methionine-dependent methyltransferases"/>
    <property type="match status" value="1"/>
</dbReference>
<protein>
    <recommendedName>
        <fullName evidence="1">Ribosomal RNA large subunit methyltransferase E</fullName>
        <ecNumber evidence="1">2.1.1.166</ecNumber>
    </recommendedName>
    <alternativeName>
        <fullName evidence="1">23S rRNA Um2552 methyltransferase</fullName>
    </alternativeName>
    <alternativeName>
        <fullName evidence="1">rRNA (uridine-2'-O-)-methyltransferase</fullName>
    </alternativeName>
</protein>
<comment type="function">
    <text evidence="1">Specifically methylates the uridine in position 2552 of 23S rRNA at the 2'-O position of the ribose in the fully assembled 50S ribosomal subunit.</text>
</comment>
<comment type="catalytic activity">
    <reaction evidence="1">
        <text>uridine(2552) in 23S rRNA + S-adenosyl-L-methionine = 2'-O-methyluridine(2552) in 23S rRNA + S-adenosyl-L-homocysteine + H(+)</text>
        <dbReference type="Rhea" id="RHEA:42720"/>
        <dbReference type="Rhea" id="RHEA-COMP:10202"/>
        <dbReference type="Rhea" id="RHEA-COMP:10203"/>
        <dbReference type="ChEBI" id="CHEBI:15378"/>
        <dbReference type="ChEBI" id="CHEBI:57856"/>
        <dbReference type="ChEBI" id="CHEBI:59789"/>
        <dbReference type="ChEBI" id="CHEBI:65315"/>
        <dbReference type="ChEBI" id="CHEBI:74478"/>
        <dbReference type="EC" id="2.1.1.166"/>
    </reaction>
</comment>
<comment type="subcellular location">
    <subcellularLocation>
        <location evidence="1">Cytoplasm</location>
    </subcellularLocation>
</comment>
<comment type="similarity">
    <text evidence="1">Belongs to the class I-like SAM-binding methyltransferase superfamily. RNA methyltransferase RlmE family.</text>
</comment>